<comment type="function">
    <text evidence="1">One of the primary rRNA binding proteins, it binds directly to 16S rRNA where it nucleates assembly of the body of the 30S subunit.</text>
</comment>
<comment type="function">
    <text evidence="1">With S5 and S12 plays an important role in translational accuracy.</text>
</comment>
<comment type="subunit">
    <text evidence="1">Part of the 30S ribosomal subunit. Contacts protein S5. The interaction surface between S4 and S5 is involved in control of translational fidelity.</text>
</comment>
<comment type="similarity">
    <text evidence="1">Belongs to the universal ribosomal protein uS4 family.</text>
</comment>
<proteinExistence type="inferred from homology"/>
<feature type="chain" id="PRO_0000293268" description="Small ribosomal subunit protein uS4">
    <location>
        <begin position="1"/>
        <end position="201"/>
    </location>
</feature>
<feature type="domain" description="S4 RNA-binding" evidence="1">
    <location>
        <begin position="92"/>
        <end position="151"/>
    </location>
</feature>
<feature type="region of interest" description="Disordered" evidence="2">
    <location>
        <begin position="1"/>
        <end position="46"/>
    </location>
</feature>
<evidence type="ECO:0000255" key="1">
    <source>
        <dbReference type="HAMAP-Rule" id="MF_01306"/>
    </source>
</evidence>
<evidence type="ECO:0000256" key="2">
    <source>
        <dbReference type="SAM" id="MobiDB-lite"/>
    </source>
</evidence>
<evidence type="ECO:0000305" key="3"/>
<reference key="1">
    <citation type="journal article" date="2007" name="Appl. Environ. Microbiol.">
        <title>Genome sequence of the cellulolytic gliding bacterium Cytophaga hutchinsonii.</title>
        <authorList>
            <person name="Xie G."/>
            <person name="Bruce D.C."/>
            <person name="Challacombe J.F."/>
            <person name="Chertkov O."/>
            <person name="Detter J.C."/>
            <person name="Gilna P."/>
            <person name="Han C.S."/>
            <person name="Lucas S."/>
            <person name="Misra M."/>
            <person name="Myers G.L."/>
            <person name="Richardson P."/>
            <person name="Tapia R."/>
            <person name="Thayer N."/>
            <person name="Thompson L.S."/>
            <person name="Brettin T.S."/>
            <person name="Henrissat B."/>
            <person name="Wilson D.B."/>
            <person name="McBride M.J."/>
        </authorList>
    </citation>
    <scope>NUCLEOTIDE SEQUENCE [LARGE SCALE GENOMIC DNA]</scope>
    <source>
        <strain>ATCC 33406 / DSM 1761 / JCM 20678 / CIP 103989 / IAM 12607 / NBRC 15051 / NCIMB 9469 / D465</strain>
    </source>
</reference>
<accession>Q11QD7</accession>
<sequence>MARYTGPRSRISRRFGEPVMGDSKALQKKNYAPGMHGRNKKRKQSEYSIQLKEKQKAKYTYGVLERQFAKTFDTAARKQGITGENLLKMLEARLDNTVYRLGIASSRRAARQLVIHKHIVVNGDVVNIPSYQLKPGDQLGVREKSKSIEAITDSLSTQSAKKFTWLEWDQSSMLGKFVTYPQREEIPENIQEQLIVELYSK</sequence>
<dbReference type="EMBL" id="CP000383">
    <property type="protein sequence ID" value="ABG60377.1"/>
    <property type="molecule type" value="Genomic_DNA"/>
</dbReference>
<dbReference type="RefSeq" id="WP_011586486.1">
    <property type="nucleotide sequence ID" value="NC_008255.1"/>
</dbReference>
<dbReference type="SMR" id="Q11QD7"/>
<dbReference type="STRING" id="269798.CHU_3137"/>
<dbReference type="KEGG" id="chu:CHU_3137"/>
<dbReference type="eggNOG" id="COG0522">
    <property type="taxonomic scope" value="Bacteria"/>
</dbReference>
<dbReference type="HOGENOM" id="CLU_092403_0_2_10"/>
<dbReference type="OrthoDB" id="9803672at2"/>
<dbReference type="Proteomes" id="UP000001822">
    <property type="component" value="Chromosome"/>
</dbReference>
<dbReference type="GO" id="GO:0015935">
    <property type="term" value="C:small ribosomal subunit"/>
    <property type="evidence" value="ECO:0007669"/>
    <property type="project" value="InterPro"/>
</dbReference>
<dbReference type="GO" id="GO:0019843">
    <property type="term" value="F:rRNA binding"/>
    <property type="evidence" value="ECO:0007669"/>
    <property type="project" value="UniProtKB-UniRule"/>
</dbReference>
<dbReference type="GO" id="GO:0003735">
    <property type="term" value="F:structural constituent of ribosome"/>
    <property type="evidence" value="ECO:0007669"/>
    <property type="project" value="InterPro"/>
</dbReference>
<dbReference type="GO" id="GO:0042274">
    <property type="term" value="P:ribosomal small subunit biogenesis"/>
    <property type="evidence" value="ECO:0007669"/>
    <property type="project" value="TreeGrafter"/>
</dbReference>
<dbReference type="GO" id="GO:0006412">
    <property type="term" value="P:translation"/>
    <property type="evidence" value="ECO:0007669"/>
    <property type="project" value="UniProtKB-UniRule"/>
</dbReference>
<dbReference type="CDD" id="cd00165">
    <property type="entry name" value="S4"/>
    <property type="match status" value="1"/>
</dbReference>
<dbReference type="FunFam" id="3.10.290.10:FF:000001">
    <property type="entry name" value="30S ribosomal protein S4"/>
    <property type="match status" value="1"/>
</dbReference>
<dbReference type="Gene3D" id="1.10.1050.10">
    <property type="entry name" value="Ribosomal Protein S4 Delta 41, Chain A, domain 1"/>
    <property type="match status" value="1"/>
</dbReference>
<dbReference type="Gene3D" id="3.10.290.10">
    <property type="entry name" value="RNA-binding S4 domain"/>
    <property type="match status" value="1"/>
</dbReference>
<dbReference type="HAMAP" id="MF_01306_B">
    <property type="entry name" value="Ribosomal_uS4_B"/>
    <property type="match status" value="1"/>
</dbReference>
<dbReference type="InterPro" id="IPR022801">
    <property type="entry name" value="Ribosomal_uS4"/>
</dbReference>
<dbReference type="InterPro" id="IPR005709">
    <property type="entry name" value="Ribosomal_uS4_bac-type"/>
</dbReference>
<dbReference type="InterPro" id="IPR018079">
    <property type="entry name" value="Ribosomal_uS4_CS"/>
</dbReference>
<dbReference type="InterPro" id="IPR001912">
    <property type="entry name" value="Ribosomal_uS4_N"/>
</dbReference>
<dbReference type="InterPro" id="IPR002942">
    <property type="entry name" value="S4_RNA-bd"/>
</dbReference>
<dbReference type="InterPro" id="IPR036986">
    <property type="entry name" value="S4_RNA-bd_sf"/>
</dbReference>
<dbReference type="NCBIfam" id="NF003717">
    <property type="entry name" value="PRK05327.1"/>
    <property type="match status" value="1"/>
</dbReference>
<dbReference type="NCBIfam" id="TIGR01017">
    <property type="entry name" value="rpsD_bact"/>
    <property type="match status" value="1"/>
</dbReference>
<dbReference type="PANTHER" id="PTHR11831">
    <property type="entry name" value="30S 40S RIBOSOMAL PROTEIN"/>
    <property type="match status" value="1"/>
</dbReference>
<dbReference type="PANTHER" id="PTHR11831:SF4">
    <property type="entry name" value="SMALL RIBOSOMAL SUBUNIT PROTEIN US4M"/>
    <property type="match status" value="1"/>
</dbReference>
<dbReference type="Pfam" id="PF00163">
    <property type="entry name" value="Ribosomal_S4"/>
    <property type="match status" value="1"/>
</dbReference>
<dbReference type="Pfam" id="PF01479">
    <property type="entry name" value="S4"/>
    <property type="match status" value="1"/>
</dbReference>
<dbReference type="SMART" id="SM01390">
    <property type="entry name" value="Ribosomal_S4"/>
    <property type="match status" value="1"/>
</dbReference>
<dbReference type="SMART" id="SM00363">
    <property type="entry name" value="S4"/>
    <property type="match status" value="1"/>
</dbReference>
<dbReference type="SUPFAM" id="SSF55174">
    <property type="entry name" value="Alpha-L RNA-binding motif"/>
    <property type="match status" value="1"/>
</dbReference>
<dbReference type="PROSITE" id="PS00632">
    <property type="entry name" value="RIBOSOMAL_S4"/>
    <property type="match status" value="1"/>
</dbReference>
<dbReference type="PROSITE" id="PS50889">
    <property type="entry name" value="S4"/>
    <property type="match status" value="1"/>
</dbReference>
<organism>
    <name type="scientific">Cytophaga hutchinsonii (strain ATCC 33406 / DSM 1761 / CIP 103989 / NBRC 15051 / NCIMB 9469 / D465)</name>
    <dbReference type="NCBI Taxonomy" id="269798"/>
    <lineage>
        <taxon>Bacteria</taxon>
        <taxon>Pseudomonadati</taxon>
        <taxon>Bacteroidota</taxon>
        <taxon>Cytophagia</taxon>
        <taxon>Cytophagales</taxon>
        <taxon>Cytophagaceae</taxon>
        <taxon>Cytophaga</taxon>
    </lineage>
</organism>
<name>RS4_CYTH3</name>
<keyword id="KW-1185">Reference proteome</keyword>
<keyword id="KW-0687">Ribonucleoprotein</keyword>
<keyword id="KW-0689">Ribosomal protein</keyword>
<keyword id="KW-0694">RNA-binding</keyword>
<keyword id="KW-0699">rRNA-binding</keyword>
<protein>
    <recommendedName>
        <fullName evidence="1">Small ribosomal subunit protein uS4</fullName>
    </recommendedName>
    <alternativeName>
        <fullName evidence="3">30S ribosomal protein S4</fullName>
    </alternativeName>
</protein>
<gene>
    <name evidence="1" type="primary">rpsD</name>
    <name type="ordered locus">CHU_3137</name>
</gene>